<name>KDGT_ECO7I</name>
<accession>B7NU97</accession>
<gene>
    <name evidence="1" type="primary">kdgT</name>
    <name type="ordered locus">ECIAI39_3086</name>
</gene>
<dbReference type="EMBL" id="CU928164">
    <property type="protein sequence ID" value="CAR19205.1"/>
    <property type="molecule type" value="Genomic_DNA"/>
</dbReference>
<dbReference type="RefSeq" id="WP_001166043.1">
    <property type="nucleotide sequence ID" value="NC_011750.1"/>
</dbReference>
<dbReference type="RefSeq" id="YP_002409016.1">
    <property type="nucleotide sequence ID" value="NC_011750.1"/>
</dbReference>
<dbReference type="STRING" id="585057.ECIAI39_3086"/>
<dbReference type="KEGG" id="ect:ECIAI39_3086"/>
<dbReference type="PATRIC" id="fig|585057.6.peg.3199"/>
<dbReference type="HOGENOM" id="CLU_057476_0_1_6"/>
<dbReference type="Proteomes" id="UP000000749">
    <property type="component" value="Chromosome"/>
</dbReference>
<dbReference type="GO" id="GO:0005886">
    <property type="term" value="C:plasma membrane"/>
    <property type="evidence" value="ECO:0007669"/>
    <property type="project" value="UniProtKB-SubCell"/>
</dbReference>
<dbReference type="GO" id="GO:0015649">
    <property type="term" value="F:2-keto-3-deoxygluconate:proton symporter activity"/>
    <property type="evidence" value="ECO:0007669"/>
    <property type="project" value="UniProtKB-UniRule"/>
</dbReference>
<dbReference type="HAMAP" id="MF_00070">
    <property type="entry name" value="KdgT"/>
    <property type="match status" value="1"/>
</dbReference>
<dbReference type="InterPro" id="IPR004684">
    <property type="entry name" value="2keto-3dGluconate_permease"/>
</dbReference>
<dbReference type="InterPro" id="IPR018395">
    <property type="entry name" value="2keto-3dGluconate_permease_sub"/>
</dbReference>
<dbReference type="NCBIfam" id="TIGR00793">
    <property type="entry name" value="kdgT"/>
    <property type="match status" value="1"/>
</dbReference>
<dbReference type="Pfam" id="PF03812">
    <property type="entry name" value="KdgT"/>
    <property type="match status" value="1"/>
</dbReference>
<sequence length="327" mass="33741">MQIKRSIEKIPGGMMLVPLFLGALCHTFSPEAGKYFGSFTNGMITGTVPILAVWFFCMGASIKLSATGTVLRKSGTLVVTKIAVAWVVAAIASRIIPEHGVEVGFFAGLSTLALVAAMDMTNGGLYASIMQQYGTKEEAGAFVLMSLESGPLMTMIILGTAGIASFEPHVFVGAVLPFLVGFALGNLDPELREFFSKAVQTLIPFFAFALGNTIDLTVIAQTGLLGILLGVAVIIVTGIPLIIADKLIGGGDGTAGIAASSSAGAAVATPVLIAEMVPAFKPMAPAATSLVATAVIVTSILVPILTSIWSRKVKARAAKIEILGTVK</sequence>
<protein>
    <recommendedName>
        <fullName evidence="1">2-keto-3-deoxygluconate permease</fullName>
        <shortName evidence="1">KDG permease</shortName>
    </recommendedName>
</protein>
<reference key="1">
    <citation type="journal article" date="2009" name="PLoS Genet.">
        <title>Organised genome dynamics in the Escherichia coli species results in highly diverse adaptive paths.</title>
        <authorList>
            <person name="Touchon M."/>
            <person name="Hoede C."/>
            <person name="Tenaillon O."/>
            <person name="Barbe V."/>
            <person name="Baeriswyl S."/>
            <person name="Bidet P."/>
            <person name="Bingen E."/>
            <person name="Bonacorsi S."/>
            <person name="Bouchier C."/>
            <person name="Bouvet O."/>
            <person name="Calteau A."/>
            <person name="Chiapello H."/>
            <person name="Clermont O."/>
            <person name="Cruveiller S."/>
            <person name="Danchin A."/>
            <person name="Diard M."/>
            <person name="Dossat C."/>
            <person name="Karoui M.E."/>
            <person name="Frapy E."/>
            <person name="Garry L."/>
            <person name="Ghigo J.M."/>
            <person name="Gilles A.M."/>
            <person name="Johnson J."/>
            <person name="Le Bouguenec C."/>
            <person name="Lescat M."/>
            <person name="Mangenot S."/>
            <person name="Martinez-Jehanne V."/>
            <person name="Matic I."/>
            <person name="Nassif X."/>
            <person name="Oztas S."/>
            <person name="Petit M.A."/>
            <person name="Pichon C."/>
            <person name="Rouy Z."/>
            <person name="Ruf C.S."/>
            <person name="Schneider D."/>
            <person name="Tourret J."/>
            <person name="Vacherie B."/>
            <person name="Vallenet D."/>
            <person name="Medigue C."/>
            <person name="Rocha E.P.C."/>
            <person name="Denamur E."/>
        </authorList>
    </citation>
    <scope>NUCLEOTIDE SEQUENCE [LARGE SCALE GENOMIC DNA]</scope>
    <source>
        <strain>IAI39 / ExPEC</strain>
    </source>
</reference>
<proteinExistence type="inferred from homology"/>
<feature type="chain" id="PRO_1000117008" description="2-keto-3-deoxygluconate permease">
    <location>
        <begin position="1"/>
        <end position="327"/>
    </location>
</feature>
<feature type="transmembrane region" description="Helical" evidence="1">
    <location>
        <begin position="10"/>
        <end position="30"/>
    </location>
</feature>
<feature type="transmembrane region" description="Helical" evidence="1">
    <location>
        <begin position="42"/>
        <end position="62"/>
    </location>
</feature>
<feature type="transmembrane region" description="Helical" evidence="1">
    <location>
        <begin position="73"/>
        <end position="93"/>
    </location>
</feature>
<feature type="transmembrane region" description="Helical" evidence="1">
    <location>
        <begin position="95"/>
        <end position="115"/>
    </location>
</feature>
<feature type="transmembrane region" description="Helical" evidence="1">
    <location>
        <begin position="139"/>
        <end position="159"/>
    </location>
</feature>
<feature type="transmembrane region" description="Helical" evidence="1">
    <location>
        <begin position="163"/>
        <end position="183"/>
    </location>
</feature>
<feature type="transmembrane region" description="Helical" evidence="1">
    <location>
        <begin position="199"/>
        <end position="219"/>
    </location>
</feature>
<feature type="transmembrane region" description="Helical" evidence="1">
    <location>
        <begin position="224"/>
        <end position="244"/>
    </location>
</feature>
<feature type="transmembrane region" description="Helical" evidence="1">
    <location>
        <begin position="254"/>
        <end position="274"/>
    </location>
</feature>
<feature type="transmembrane region" description="Helical" evidence="1">
    <location>
        <begin position="289"/>
        <end position="309"/>
    </location>
</feature>
<evidence type="ECO:0000255" key="1">
    <source>
        <dbReference type="HAMAP-Rule" id="MF_00070"/>
    </source>
</evidence>
<keyword id="KW-0997">Cell inner membrane</keyword>
<keyword id="KW-1003">Cell membrane</keyword>
<keyword id="KW-0472">Membrane</keyword>
<keyword id="KW-0762">Sugar transport</keyword>
<keyword id="KW-0769">Symport</keyword>
<keyword id="KW-0812">Transmembrane</keyword>
<keyword id="KW-1133">Transmembrane helix</keyword>
<keyword id="KW-0813">Transport</keyword>
<comment type="function">
    <text evidence="1">Catalyzes the proton-dependent uptake of 2-keto-3-deoxygluconate (KDG) into the cell.</text>
</comment>
<comment type="catalytic activity">
    <reaction evidence="1">
        <text>2-dehydro-3-deoxy-D-gluconate(in) + H(+)(in) = 2-dehydro-3-deoxy-D-gluconate(out) + H(+)(out)</text>
        <dbReference type="Rhea" id="RHEA:29943"/>
        <dbReference type="ChEBI" id="CHEBI:15378"/>
        <dbReference type="ChEBI" id="CHEBI:57990"/>
    </reaction>
    <physiologicalReaction direction="right-to-left" evidence="1">
        <dbReference type="Rhea" id="RHEA:29945"/>
    </physiologicalReaction>
</comment>
<comment type="subcellular location">
    <subcellularLocation>
        <location evidence="1">Cell inner membrane</location>
        <topology evidence="1">Multi-pass membrane protein</topology>
    </subcellularLocation>
</comment>
<comment type="similarity">
    <text evidence="1">Belongs to the KdgT transporter family.</text>
</comment>
<organism>
    <name type="scientific">Escherichia coli O7:K1 (strain IAI39 / ExPEC)</name>
    <dbReference type="NCBI Taxonomy" id="585057"/>
    <lineage>
        <taxon>Bacteria</taxon>
        <taxon>Pseudomonadati</taxon>
        <taxon>Pseudomonadota</taxon>
        <taxon>Gammaproteobacteria</taxon>
        <taxon>Enterobacterales</taxon>
        <taxon>Enterobacteriaceae</taxon>
        <taxon>Escherichia</taxon>
    </lineage>
</organism>